<accession>Q9DAY2</accession>
<accession>Q9DAW0</accession>
<accession>Q9Z249</accession>
<organism>
    <name type="scientific">Mus musculus</name>
    <name type="common">Mouse</name>
    <dbReference type="NCBI Taxonomy" id="10090"/>
    <lineage>
        <taxon>Eukaryota</taxon>
        <taxon>Metazoa</taxon>
        <taxon>Chordata</taxon>
        <taxon>Craniata</taxon>
        <taxon>Vertebrata</taxon>
        <taxon>Euteleostomi</taxon>
        <taxon>Mammalia</taxon>
        <taxon>Eutheria</taxon>
        <taxon>Euarchontoglires</taxon>
        <taxon>Glires</taxon>
        <taxon>Rodentia</taxon>
        <taxon>Myomorpha</taxon>
        <taxon>Muroidea</taxon>
        <taxon>Muridae</taxon>
        <taxon>Murinae</taxon>
        <taxon>Mus</taxon>
        <taxon>Mus</taxon>
    </lineage>
</organism>
<feature type="signal peptide" evidence="2">
    <location>
        <begin position="1"/>
        <end position="30"/>
    </location>
</feature>
<feature type="chain" id="PRO_0000045396" description="Prolactin-8A6">
    <location>
        <begin position="31"/>
        <end position="240"/>
    </location>
</feature>
<feature type="glycosylation site" description="N-linked (GlcNAc...) asparagine" evidence="2">
    <location>
        <position position="212"/>
    </location>
</feature>
<feature type="disulfide bond" evidence="2">
    <location>
        <begin position="34"/>
        <end position="41"/>
    </location>
</feature>
<feature type="disulfide bond" evidence="1">
    <location>
        <begin position="101"/>
        <end position="216"/>
    </location>
</feature>
<feature type="disulfide bond" evidence="1">
    <location>
        <begin position="233"/>
        <end position="240"/>
    </location>
</feature>
<feature type="splice variant" id="VSP_016903" description="In isoform 3." evidence="4 6">
    <original>SG</original>
    <variation>C</variation>
    <location>
        <begin position="11"/>
        <end position="12"/>
    </location>
</feature>
<feature type="splice variant" id="VSP_016904" description="In isoform 2." evidence="5">
    <location>
        <begin position="84"/>
        <end position="118"/>
    </location>
</feature>
<gene>
    <name type="primary">Prl8a6</name>
    <name type="synonym">Prlpc</name>
    <name type="synonym">Prlpc1</name>
</gene>
<keyword id="KW-0025">Alternative splicing</keyword>
<keyword id="KW-1015">Disulfide bond</keyword>
<keyword id="KW-0325">Glycoprotein</keyword>
<keyword id="KW-0372">Hormone</keyword>
<keyword id="KW-1185">Reference proteome</keyword>
<keyword id="KW-0964">Secreted</keyword>
<keyword id="KW-0732">Signal</keyword>
<reference key="1">
    <citation type="journal article" date="1998" name="Endocrinology">
        <title>A new member of the mouse prolactin (PRL)-like protein-C subfamily, PRL-like protein-C alpha: structure and expression.</title>
        <authorList>
            <person name="Dai G."/>
            <person name="Chapman B.M."/>
            <person name="Liu B."/>
            <person name="Orwig K.E."/>
            <person name="Wang D."/>
            <person name="White R.A."/>
            <person name="Preuett B."/>
            <person name="Soares M.J."/>
        </authorList>
    </citation>
    <scope>NUCLEOTIDE SEQUENCE [MRNA] (ISOFORM 3)</scope>
    <scope>TISSUE SPECIFICITY</scope>
    <scope>DEVELOPMENTAL STAGE</scope>
    <source>
        <strain>CD-1</strain>
    </source>
</reference>
<reference key="2">
    <citation type="journal article" date="2005" name="Science">
        <title>The transcriptional landscape of the mammalian genome.</title>
        <authorList>
            <person name="Carninci P."/>
            <person name="Kasukawa T."/>
            <person name="Katayama S."/>
            <person name="Gough J."/>
            <person name="Frith M.C."/>
            <person name="Maeda N."/>
            <person name="Oyama R."/>
            <person name="Ravasi T."/>
            <person name="Lenhard B."/>
            <person name="Wells C."/>
            <person name="Kodzius R."/>
            <person name="Shimokawa K."/>
            <person name="Bajic V.B."/>
            <person name="Brenner S.E."/>
            <person name="Batalov S."/>
            <person name="Forrest A.R."/>
            <person name="Zavolan M."/>
            <person name="Davis M.J."/>
            <person name="Wilming L.G."/>
            <person name="Aidinis V."/>
            <person name="Allen J.E."/>
            <person name="Ambesi-Impiombato A."/>
            <person name="Apweiler R."/>
            <person name="Aturaliya R.N."/>
            <person name="Bailey T.L."/>
            <person name="Bansal M."/>
            <person name="Baxter L."/>
            <person name="Beisel K.W."/>
            <person name="Bersano T."/>
            <person name="Bono H."/>
            <person name="Chalk A.M."/>
            <person name="Chiu K.P."/>
            <person name="Choudhary V."/>
            <person name="Christoffels A."/>
            <person name="Clutterbuck D.R."/>
            <person name="Crowe M.L."/>
            <person name="Dalla E."/>
            <person name="Dalrymple B.P."/>
            <person name="de Bono B."/>
            <person name="Della Gatta G."/>
            <person name="di Bernardo D."/>
            <person name="Down T."/>
            <person name="Engstrom P."/>
            <person name="Fagiolini M."/>
            <person name="Faulkner G."/>
            <person name="Fletcher C.F."/>
            <person name="Fukushima T."/>
            <person name="Furuno M."/>
            <person name="Futaki S."/>
            <person name="Gariboldi M."/>
            <person name="Georgii-Hemming P."/>
            <person name="Gingeras T.R."/>
            <person name="Gojobori T."/>
            <person name="Green R.E."/>
            <person name="Gustincich S."/>
            <person name="Harbers M."/>
            <person name="Hayashi Y."/>
            <person name="Hensch T.K."/>
            <person name="Hirokawa N."/>
            <person name="Hill D."/>
            <person name="Huminiecki L."/>
            <person name="Iacono M."/>
            <person name="Ikeo K."/>
            <person name="Iwama A."/>
            <person name="Ishikawa T."/>
            <person name="Jakt M."/>
            <person name="Kanapin A."/>
            <person name="Katoh M."/>
            <person name="Kawasawa Y."/>
            <person name="Kelso J."/>
            <person name="Kitamura H."/>
            <person name="Kitano H."/>
            <person name="Kollias G."/>
            <person name="Krishnan S.P."/>
            <person name="Kruger A."/>
            <person name="Kummerfeld S.K."/>
            <person name="Kurochkin I.V."/>
            <person name="Lareau L.F."/>
            <person name="Lazarevic D."/>
            <person name="Lipovich L."/>
            <person name="Liu J."/>
            <person name="Liuni S."/>
            <person name="McWilliam S."/>
            <person name="Madan Babu M."/>
            <person name="Madera M."/>
            <person name="Marchionni L."/>
            <person name="Matsuda H."/>
            <person name="Matsuzawa S."/>
            <person name="Miki H."/>
            <person name="Mignone F."/>
            <person name="Miyake S."/>
            <person name="Morris K."/>
            <person name="Mottagui-Tabar S."/>
            <person name="Mulder N."/>
            <person name="Nakano N."/>
            <person name="Nakauchi H."/>
            <person name="Ng P."/>
            <person name="Nilsson R."/>
            <person name="Nishiguchi S."/>
            <person name="Nishikawa S."/>
            <person name="Nori F."/>
            <person name="Ohara O."/>
            <person name="Okazaki Y."/>
            <person name="Orlando V."/>
            <person name="Pang K.C."/>
            <person name="Pavan W.J."/>
            <person name="Pavesi G."/>
            <person name="Pesole G."/>
            <person name="Petrovsky N."/>
            <person name="Piazza S."/>
            <person name="Reed J."/>
            <person name="Reid J.F."/>
            <person name="Ring B.Z."/>
            <person name="Ringwald M."/>
            <person name="Rost B."/>
            <person name="Ruan Y."/>
            <person name="Salzberg S.L."/>
            <person name="Sandelin A."/>
            <person name="Schneider C."/>
            <person name="Schoenbach C."/>
            <person name="Sekiguchi K."/>
            <person name="Semple C.A."/>
            <person name="Seno S."/>
            <person name="Sessa L."/>
            <person name="Sheng Y."/>
            <person name="Shibata Y."/>
            <person name="Shimada H."/>
            <person name="Shimada K."/>
            <person name="Silva D."/>
            <person name="Sinclair B."/>
            <person name="Sperling S."/>
            <person name="Stupka E."/>
            <person name="Sugiura K."/>
            <person name="Sultana R."/>
            <person name="Takenaka Y."/>
            <person name="Taki K."/>
            <person name="Tammoja K."/>
            <person name="Tan S.L."/>
            <person name="Tang S."/>
            <person name="Taylor M.S."/>
            <person name="Tegner J."/>
            <person name="Teichmann S.A."/>
            <person name="Ueda H.R."/>
            <person name="van Nimwegen E."/>
            <person name="Verardo R."/>
            <person name="Wei C.L."/>
            <person name="Yagi K."/>
            <person name="Yamanishi H."/>
            <person name="Zabarovsky E."/>
            <person name="Zhu S."/>
            <person name="Zimmer A."/>
            <person name="Hide W."/>
            <person name="Bult C."/>
            <person name="Grimmond S.M."/>
            <person name="Teasdale R.D."/>
            <person name="Liu E.T."/>
            <person name="Brusic V."/>
            <person name="Quackenbush J."/>
            <person name="Wahlestedt C."/>
            <person name="Mattick J.S."/>
            <person name="Hume D.A."/>
            <person name="Kai C."/>
            <person name="Sasaki D."/>
            <person name="Tomaru Y."/>
            <person name="Fukuda S."/>
            <person name="Kanamori-Katayama M."/>
            <person name="Suzuki M."/>
            <person name="Aoki J."/>
            <person name="Arakawa T."/>
            <person name="Iida J."/>
            <person name="Imamura K."/>
            <person name="Itoh M."/>
            <person name="Kato T."/>
            <person name="Kawaji H."/>
            <person name="Kawagashira N."/>
            <person name="Kawashima T."/>
            <person name="Kojima M."/>
            <person name="Kondo S."/>
            <person name="Konno H."/>
            <person name="Nakano K."/>
            <person name="Ninomiya N."/>
            <person name="Nishio T."/>
            <person name="Okada M."/>
            <person name="Plessy C."/>
            <person name="Shibata K."/>
            <person name="Shiraki T."/>
            <person name="Suzuki S."/>
            <person name="Tagami M."/>
            <person name="Waki K."/>
            <person name="Watahiki A."/>
            <person name="Okamura-Oho Y."/>
            <person name="Suzuki H."/>
            <person name="Kawai J."/>
            <person name="Hayashizaki Y."/>
        </authorList>
    </citation>
    <scope>NUCLEOTIDE SEQUENCE [LARGE SCALE MRNA] (ISOFORMS 1 AND 2)</scope>
    <source>
        <strain>C57BL/6J</strain>
        <tissue>Placenta</tissue>
    </source>
</reference>
<reference key="3">
    <citation type="journal article" date="2009" name="PLoS Biol.">
        <title>Lineage-specific biology revealed by a finished genome assembly of the mouse.</title>
        <authorList>
            <person name="Church D.M."/>
            <person name="Goodstadt L."/>
            <person name="Hillier L.W."/>
            <person name="Zody M.C."/>
            <person name="Goldstein S."/>
            <person name="She X."/>
            <person name="Bult C.J."/>
            <person name="Agarwala R."/>
            <person name="Cherry J.L."/>
            <person name="DiCuccio M."/>
            <person name="Hlavina W."/>
            <person name="Kapustin Y."/>
            <person name="Meric P."/>
            <person name="Maglott D."/>
            <person name="Birtle Z."/>
            <person name="Marques A.C."/>
            <person name="Graves T."/>
            <person name="Zhou S."/>
            <person name="Teague B."/>
            <person name="Potamousis K."/>
            <person name="Churas C."/>
            <person name="Place M."/>
            <person name="Herschleb J."/>
            <person name="Runnheim R."/>
            <person name="Forrest D."/>
            <person name="Amos-Landgraf J."/>
            <person name="Schwartz D.C."/>
            <person name="Cheng Z."/>
            <person name="Lindblad-Toh K."/>
            <person name="Eichler E.E."/>
            <person name="Ponting C.P."/>
        </authorList>
    </citation>
    <scope>NUCLEOTIDE SEQUENCE [LARGE SCALE GENOMIC DNA]</scope>
    <source>
        <strain>C57BL/6J</strain>
    </source>
</reference>
<reference key="4">
    <citation type="journal article" date="2004" name="Genome Res.">
        <title>The status, quality, and expansion of the NIH full-length cDNA project: the Mammalian Gene Collection (MGC).</title>
        <authorList>
            <consortium name="The MGC Project Team"/>
        </authorList>
    </citation>
    <scope>NUCLEOTIDE SEQUENCE [LARGE SCALE MRNA] (ISOFORM 3)</scope>
    <source>
        <tissue>Placenta</tissue>
    </source>
</reference>
<proteinExistence type="evidence at transcript level"/>
<protein>
    <recommendedName>
        <fullName>Prolactin-8A6</fullName>
    </recommendedName>
    <alternativeName>
        <fullName>Placental prolactin-like protein C1</fullName>
        <shortName>PLP-C1</shortName>
        <shortName>PRL-like protein C1</shortName>
    </alternativeName>
    <alternativeName>
        <fullName>Prolactin-like protein C-alpha</fullName>
        <shortName>PLP C-alpha</shortName>
        <shortName>Prolactin-like protein C</shortName>
    </alternativeName>
</protein>
<dbReference type="EMBL" id="AF090140">
    <property type="protein sequence ID" value="AAD09012.1"/>
    <property type="molecule type" value="mRNA"/>
</dbReference>
<dbReference type="EMBL" id="AK005435">
    <property type="protein sequence ID" value="BAB24029.1"/>
    <property type="molecule type" value="mRNA"/>
</dbReference>
<dbReference type="EMBL" id="AK005478">
    <property type="protein sequence ID" value="BAB24067.1"/>
    <property type="molecule type" value="mRNA"/>
</dbReference>
<dbReference type="EMBL" id="AL592443">
    <property type="status" value="NOT_ANNOTATED_CDS"/>
    <property type="molecule type" value="Genomic_DNA"/>
</dbReference>
<dbReference type="EMBL" id="BC099469">
    <property type="protein sequence ID" value="AAH99469.1"/>
    <property type="molecule type" value="mRNA"/>
</dbReference>
<dbReference type="CCDS" id="CCDS26398.1">
    <molecule id="Q9DAY2-3"/>
</dbReference>
<dbReference type="CCDS" id="CCDS70441.1">
    <molecule id="Q9DAY2-2"/>
</dbReference>
<dbReference type="CCDS" id="CCDS70442.1">
    <molecule id="Q9DAY2-1"/>
</dbReference>
<dbReference type="RefSeq" id="NP_001258307.1">
    <molecule id="Q9DAY2-1"/>
    <property type="nucleotide sequence ID" value="NM_001271378.1"/>
</dbReference>
<dbReference type="RefSeq" id="NP_001258308.1">
    <molecule id="Q9DAY2-2"/>
    <property type="nucleotide sequence ID" value="NM_001271379.1"/>
</dbReference>
<dbReference type="RefSeq" id="NP_035297.1">
    <molecule id="Q9DAY2-3"/>
    <property type="nucleotide sequence ID" value="NM_011167.3"/>
</dbReference>
<dbReference type="SMR" id="Q9DAY2"/>
<dbReference type="FunCoup" id="Q9DAY2">
    <property type="interactions" value="34"/>
</dbReference>
<dbReference type="STRING" id="10090.ENSMUSP00000105984"/>
<dbReference type="GlyCosmos" id="Q9DAY2">
    <property type="glycosylation" value="1 site, No reported glycans"/>
</dbReference>
<dbReference type="GlyGen" id="Q9DAY2">
    <property type="glycosylation" value="1 site"/>
</dbReference>
<dbReference type="PaxDb" id="10090-ENSMUSP00000105984"/>
<dbReference type="PeptideAtlas" id="Q9DAY2"/>
<dbReference type="DNASU" id="19112"/>
<dbReference type="Ensembl" id="ENSMUST00000018392.9">
    <molecule id="Q9DAY2-3"/>
    <property type="protein sequence ID" value="ENSMUSP00000018392.8"/>
    <property type="gene ID" value="ENSMUSG00000021345.17"/>
</dbReference>
<dbReference type="Ensembl" id="ENSMUST00000080762.12">
    <molecule id="Q9DAY2-2"/>
    <property type="protein sequence ID" value="ENSMUSP00000079584.6"/>
    <property type="gene ID" value="ENSMUSG00000021345.17"/>
</dbReference>
<dbReference type="Ensembl" id="ENSMUST00000110355.10">
    <molecule id="Q9DAY2-1"/>
    <property type="protein sequence ID" value="ENSMUSP00000105984.3"/>
    <property type="gene ID" value="ENSMUSG00000021345.17"/>
</dbReference>
<dbReference type="GeneID" id="19112"/>
<dbReference type="KEGG" id="mmu:19112"/>
<dbReference type="UCSC" id="uc007pxo.2">
    <molecule id="Q9DAY2-3"/>
    <property type="organism name" value="mouse"/>
</dbReference>
<dbReference type="UCSC" id="uc007pxp.2">
    <molecule id="Q9DAY2-1"/>
    <property type="organism name" value="mouse"/>
</dbReference>
<dbReference type="UCSC" id="uc007pxq.2">
    <molecule id="Q9DAY2-2"/>
    <property type="organism name" value="mouse"/>
</dbReference>
<dbReference type="AGR" id="MGI:1332225"/>
<dbReference type="CTD" id="19112"/>
<dbReference type="MGI" id="MGI:1332225">
    <property type="gene designation" value="Prl8a6"/>
</dbReference>
<dbReference type="VEuPathDB" id="HostDB:ENSMUSG00000021345"/>
<dbReference type="eggNOG" id="ENOG502QYU3">
    <property type="taxonomic scope" value="Eukaryota"/>
</dbReference>
<dbReference type="GeneTree" id="ENSGT00950000182818"/>
<dbReference type="HOGENOM" id="CLU_088274_0_1_1"/>
<dbReference type="InParanoid" id="Q9DAY2"/>
<dbReference type="OMA" id="CFYVAGK"/>
<dbReference type="OrthoDB" id="9604840at2759"/>
<dbReference type="PhylomeDB" id="Q9DAY2"/>
<dbReference type="TreeFam" id="TF332592"/>
<dbReference type="BioGRID-ORCS" id="19112">
    <property type="hits" value="0 hits in 77 CRISPR screens"/>
</dbReference>
<dbReference type="ChiTaRS" id="Prl8a6">
    <property type="organism name" value="mouse"/>
</dbReference>
<dbReference type="PRO" id="PR:Q9DAY2"/>
<dbReference type="Proteomes" id="UP000000589">
    <property type="component" value="Chromosome 13"/>
</dbReference>
<dbReference type="RNAct" id="Q9DAY2">
    <property type="molecule type" value="protein"/>
</dbReference>
<dbReference type="Bgee" id="ENSMUSG00000021345">
    <property type="expression patterns" value="Expressed in placenta labyrinth and 7 other cell types or tissues"/>
</dbReference>
<dbReference type="ExpressionAtlas" id="Q9DAY2">
    <property type="expression patterns" value="baseline and differential"/>
</dbReference>
<dbReference type="GO" id="GO:0005576">
    <property type="term" value="C:extracellular region"/>
    <property type="evidence" value="ECO:0007669"/>
    <property type="project" value="UniProtKB-SubCell"/>
</dbReference>
<dbReference type="GO" id="GO:0005179">
    <property type="term" value="F:hormone activity"/>
    <property type="evidence" value="ECO:0007669"/>
    <property type="project" value="UniProtKB-KW"/>
</dbReference>
<dbReference type="GO" id="GO:0005102">
    <property type="term" value="F:signaling receptor binding"/>
    <property type="evidence" value="ECO:0000247"/>
    <property type="project" value="MGI"/>
</dbReference>
<dbReference type="CDD" id="cd10288">
    <property type="entry name" value="prolactin_like"/>
    <property type="match status" value="1"/>
</dbReference>
<dbReference type="FunFam" id="1.20.1250.10:FF:000036">
    <property type="entry name" value="Growth hormone d15"/>
    <property type="match status" value="1"/>
</dbReference>
<dbReference type="Gene3D" id="1.20.1250.10">
    <property type="match status" value="1"/>
</dbReference>
<dbReference type="InterPro" id="IPR009079">
    <property type="entry name" value="4_helix_cytokine-like_core"/>
</dbReference>
<dbReference type="InterPro" id="IPR001400">
    <property type="entry name" value="Somatotropin/Prolactin"/>
</dbReference>
<dbReference type="PANTHER" id="PTHR11417:SF69">
    <property type="entry name" value="PROLACTIN-8A6-RELATED"/>
    <property type="match status" value="1"/>
</dbReference>
<dbReference type="PANTHER" id="PTHR11417">
    <property type="entry name" value="SOMATOTROPIN,PROLACTIN"/>
    <property type="match status" value="1"/>
</dbReference>
<dbReference type="Pfam" id="PF00103">
    <property type="entry name" value="Hormone_1"/>
    <property type="match status" value="1"/>
</dbReference>
<dbReference type="SUPFAM" id="SSF47266">
    <property type="entry name" value="4-helical cytokines"/>
    <property type="match status" value="1"/>
</dbReference>
<evidence type="ECO:0000250" key="1"/>
<evidence type="ECO:0000255" key="2"/>
<evidence type="ECO:0000269" key="3">
    <source>
    </source>
</evidence>
<evidence type="ECO:0000303" key="4">
    <source>
    </source>
</evidence>
<evidence type="ECO:0000303" key="5">
    <source>
    </source>
</evidence>
<evidence type="ECO:0000303" key="6">
    <source>
    </source>
</evidence>
<evidence type="ECO:0000305" key="7"/>
<comment type="subcellular location">
    <subcellularLocation>
        <location evidence="1">Secreted</location>
    </subcellularLocation>
</comment>
<comment type="alternative products">
    <event type="alternative splicing"/>
    <isoform>
        <id>Q9DAY2-1</id>
        <name>1</name>
        <sequence type="displayed"/>
    </isoform>
    <isoform>
        <id>Q9DAY2-2</id>
        <name>2</name>
        <sequence type="described" ref="VSP_016904"/>
    </isoform>
    <isoform>
        <id>Q9DAY2-3</id>
        <name>3</name>
        <sequence type="described" ref="VSP_016903"/>
    </isoform>
</comment>
<comment type="tissue specificity">
    <text evidence="3">Expressed specifically in the spongiotrophoblast and trophoblast giant cells from the junctional zone of the chorioallantoic placenta.</text>
</comment>
<comment type="developmental stage">
    <text evidence="3">Expression increased from midgestation to the end of the pregnancy.</text>
</comment>
<comment type="similarity">
    <text evidence="7">Belongs to the somatotropin/prolactin family.</text>
</comment>
<name>PR8A6_MOUSE</name>
<sequence>MALLLSQPHFSGPLLLLVVSNLLLWEKAASNLPCVAEEGGCWNPLLETFNSATQKAETLHNLADQLYVELYYNQFSSGQFWDFSSQIIRQDKTVVRAGSYCHSSLTNPPNTGVHINIEIASYLKTLINFVGSWISPLFHLVIELSATKDVPETILSKAKEIEENNRQILSDLRWILTKVSPAAEMTEEFPHWEYLSFLKSSDKNNKFLAMFNLSYCIDHDSKYILLQLRLLKCLITGKDC</sequence>